<organism>
    <name type="scientific">Karoophasma biedouwense</name>
    <name type="common">Gladiator</name>
    <name type="synonym">Heel-walker</name>
    <dbReference type="NCBI Taxonomy" id="253133"/>
    <lineage>
        <taxon>Eukaryota</taxon>
        <taxon>Metazoa</taxon>
        <taxon>Ecdysozoa</taxon>
        <taxon>Arthropoda</taxon>
        <taxon>Hexapoda</taxon>
        <taxon>Insecta</taxon>
        <taxon>Pterygota</taxon>
        <taxon>Neoptera</taxon>
        <taxon>Polyneoptera</taxon>
        <taxon>Mantophasmatodea</taxon>
        <taxon>Austrophasmatidae</taxon>
        <taxon>Karoophasma</taxon>
    </lineage>
</organism>
<proteinExistence type="evidence at protein level"/>
<protein>
    <recommendedName>
        <fullName evidence="4">Extended FMRFamide-12</fullName>
        <shortName evidence="4">FMRFa-12</shortName>
    </recommendedName>
</protein>
<keyword id="KW-0027">Amidation</keyword>
<keyword id="KW-0903">Direct protein sequencing</keyword>
<keyword id="KW-0527">Neuropeptide</keyword>
<keyword id="KW-0964">Secreted</keyword>
<evidence type="ECO:0000250" key="1">
    <source>
        <dbReference type="UniProtKB" id="P34405"/>
    </source>
</evidence>
<evidence type="ECO:0000255" key="2"/>
<evidence type="ECO:0000269" key="3">
    <source>
    </source>
</evidence>
<evidence type="ECO:0000303" key="4">
    <source>
    </source>
</evidence>
<evidence type="ECO:0000305" key="5"/>
<evidence type="ECO:0000305" key="6">
    <source>
    </source>
</evidence>
<name>FAR12_KARBI</name>
<reference evidence="5" key="1">
    <citation type="journal article" date="2012" name="Syst. Biol.">
        <title>Peptidomics-based phylogeny and biogeography of Mantophasmatodea (Hexapoda).</title>
        <authorList>
            <person name="Predel R."/>
            <person name="Neupert S."/>
            <person name="Huetteroth W."/>
            <person name="Kahnt J."/>
            <person name="Waidelich D."/>
            <person name="Roth S."/>
        </authorList>
    </citation>
    <scope>PROTEIN SEQUENCE</scope>
    <scope>AMIDATION AT LEU-15</scope>
    <source>
        <tissue evidence="3">Thoracic perisympathetic organs</tissue>
    </source>
</reference>
<sequence length="15" mass="1756">SPALDDEHNDNFLRL</sequence>
<feature type="peptide" id="PRO_0000421557" description="Extended FMRFamide-12" evidence="3">
    <location>
        <begin position="1"/>
        <end position="15"/>
    </location>
</feature>
<feature type="modified residue" description="Leucine amide" evidence="3">
    <location>
        <position position="15"/>
    </location>
</feature>
<feature type="unsure residue" description="L or I" evidence="3">
    <location>
        <position position="4"/>
    </location>
</feature>
<feature type="unsure residue" description="L or I" evidence="3">
    <location>
        <position position="13"/>
    </location>
</feature>
<feature type="unsure residue" description="L or I" evidence="3">
    <location>
        <position position="15"/>
    </location>
</feature>
<accession>B3A071</accession>
<comment type="function">
    <text evidence="1">FMRFamides and FMRFamide-like peptides are neuropeptides.</text>
</comment>
<comment type="subcellular location">
    <subcellularLocation>
        <location evidence="6">Secreted</location>
    </subcellularLocation>
</comment>
<comment type="similarity">
    <text evidence="2">Belongs to the FARP (FMRF amide related peptide) family.</text>
</comment>
<dbReference type="GO" id="GO:0005576">
    <property type="term" value="C:extracellular region"/>
    <property type="evidence" value="ECO:0007669"/>
    <property type="project" value="UniProtKB-SubCell"/>
</dbReference>
<dbReference type="GO" id="GO:0007218">
    <property type="term" value="P:neuropeptide signaling pathway"/>
    <property type="evidence" value="ECO:0007669"/>
    <property type="project" value="UniProtKB-KW"/>
</dbReference>